<evidence type="ECO:0000305" key="1"/>
<protein>
    <recommendedName>
        <fullName>Luciferase-like monooxygenase</fullName>
    </recommendedName>
</protein>
<accession>P0ADV6</accession>
<accession>P45529</accession>
<keyword id="KW-0560">Oxidoreductase</keyword>
<keyword id="KW-1185">Reference proteome</keyword>
<reference key="1">
    <citation type="journal article" date="2002" name="Proc. Natl. Acad. Sci. U.S.A.">
        <title>Extensive mosaic structure revealed by the complete genome sequence of uropathogenic Escherichia coli.</title>
        <authorList>
            <person name="Welch R.A."/>
            <person name="Burland V."/>
            <person name="Plunkett G. III"/>
            <person name="Redford P."/>
            <person name="Roesch P."/>
            <person name="Rasko D."/>
            <person name="Buckles E.L."/>
            <person name="Liou S.-R."/>
            <person name="Boutin A."/>
            <person name="Hackett J."/>
            <person name="Stroud D."/>
            <person name="Mayhew G.F."/>
            <person name="Rose D.J."/>
            <person name="Zhou S."/>
            <person name="Schwartz D.C."/>
            <person name="Perna N.T."/>
            <person name="Mobley H.L.T."/>
            <person name="Donnenberg M.S."/>
            <person name="Blattner F.R."/>
        </authorList>
    </citation>
    <scope>NUCLEOTIDE SEQUENCE [LARGE SCALE GENOMIC DNA]</scope>
    <source>
        <strain>CFT073 / ATCC 700928 / UPEC</strain>
    </source>
</reference>
<dbReference type="EMBL" id="AE014075">
    <property type="protein sequence ID" value="AAN82354.1"/>
    <property type="molecule type" value="Genomic_DNA"/>
</dbReference>
<dbReference type="RefSeq" id="WP_000130380.1">
    <property type="nucleotide sequence ID" value="NZ_CP051263.1"/>
</dbReference>
<dbReference type="SMR" id="P0ADV6"/>
<dbReference type="STRING" id="199310.c3913"/>
<dbReference type="KEGG" id="ecc:c3913"/>
<dbReference type="eggNOG" id="COG2141">
    <property type="taxonomic scope" value="Bacteria"/>
</dbReference>
<dbReference type="HOGENOM" id="CLU_027853_9_1_6"/>
<dbReference type="BioCyc" id="ECOL199310:C3913-MONOMER"/>
<dbReference type="Proteomes" id="UP000001410">
    <property type="component" value="Chromosome"/>
</dbReference>
<dbReference type="GO" id="GO:0005829">
    <property type="term" value="C:cytosol"/>
    <property type="evidence" value="ECO:0007669"/>
    <property type="project" value="TreeGrafter"/>
</dbReference>
<dbReference type="GO" id="GO:0016705">
    <property type="term" value="F:oxidoreductase activity, acting on paired donors, with incorporation or reduction of molecular oxygen"/>
    <property type="evidence" value="ECO:0007669"/>
    <property type="project" value="InterPro"/>
</dbReference>
<dbReference type="FunFam" id="3.20.20.30:FF:000002">
    <property type="entry name" value="LLM class flavin-dependent oxidoreductase"/>
    <property type="match status" value="1"/>
</dbReference>
<dbReference type="Gene3D" id="3.20.20.30">
    <property type="entry name" value="Luciferase-like domain"/>
    <property type="match status" value="1"/>
</dbReference>
<dbReference type="InterPro" id="IPR050766">
    <property type="entry name" value="Bact_Lucif_Oxidored"/>
</dbReference>
<dbReference type="InterPro" id="IPR019949">
    <property type="entry name" value="CmoO-like"/>
</dbReference>
<dbReference type="InterPro" id="IPR011251">
    <property type="entry name" value="Luciferase-like_dom"/>
</dbReference>
<dbReference type="InterPro" id="IPR036661">
    <property type="entry name" value="Luciferase-like_sf"/>
</dbReference>
<dbReference type="NCBIfam" id="TIGR03558">
    <property type="entry name" value="oxido_grp_1"/>
    <property type="match status" value="1"/>
</dbReference>
<dbReference type="NCBIfam" id="NF007802">
    <property type="entry name" value="PRK10508.1"/>
    <property type="match status" value="1"/>
</dbReference>
<dbReference type="PANTHER" id="PTHR30137">
    <property type="entry name" value="LUCIFERASE-LIKE MONOOXYGENASE"/>
    <property type="match status" value="1"/>
</dbReference>
<dbReference type="PANTHER" id="PTHR30137:SF6">
    <property type="entry name" value="LUCIFERASE-LIKE MONOOXYGENASE"/>
    <property type="match status" value="1"/>
</dbReference>
<dbReference type="Pfam" id="PF00296">
    <property type="entry name" value="Bac_luciferase"/>
    <property type="match status" value="1"/>
</dbReference>
<dbReference type="SUPFAM" id="SSF51679">
    <property type="entry name" value="Bacterial luciferase-like"/>
    <property type="match status" value="1"/>
</dbReference>
<gene>
    <name type="primary">yhbW</name>
    <name type="ordered locus">c3913</name>
</gene>
<proteinExistence type="predicted"/>
<comment type="similarity">
    <text evidence="1">To bacterial alkanal monooxygenase alpha and beta chains.</text>
</comment>
<feature type="chain" id="PRO_0000169461" description="Luciferase-like monooxygenase">
    <location>
        <begin position="1"/>
        <end position="335"/>
    </location>
</feature>
<organism>
    <name type="scientific">Escherichia coli O6:H1 (strain CFT073 / ATCC 700928 / UPEC)</name>
    <dbReference type="NCBI Taxonomy" id="199310"/>
    <lineage>
        <taxon>Bacteria</taxon>
        <taxon>Pseudomonadati</taxon>
        <taxon>Pseudomonadota</taxon>
        <taxon>Gammaproteobacteria</taxon>
        <taxon>Enterobacterales</taxon>
        <taxon>Enterobacteriaceae</taxon>
        <taxon>Escherichia</taxon>
    </lineage>
</organism>
<name>YHBW_ECOL6</name>
<sequence length="335" mass="37129">MTDKTIAFSLLDLAPIPEGSSAREAFSHSLDLARLAEKRGYHRYWLAEHHNMTGIASAATSVLIGYLAANTTTLHLGSGGVMLPNHSPLVIAEQFGTLNTLYPGRIDLGLGRAPGSDQRTMMALRRHMSGDIDNFPRDVAELVDWFDARDPNPHVRPVPGYGEKIPVWLLGSSLYSAQLAAQLGLPFAFASHFAPDMLFQALHLYRSNFKPSARLEKPYAMVCINIIAADSNRDAEFLFTSMQQAFVKLRRGETGQLPPPIQNMDQFWSPSEQYGVQQALSMSLVGDKAKVRHGLQSILRETDADEIMVNGQIFDHQARLHSFELAMDVKEELLG</sequence>